<organism>
    <name type="scientific">Staphylococcus aureus (strain N315)</name>
    <dbReference type="NCBI Taxonomy" id="158879"/>
    <lineage>
        <taxon>Bacteria</taxon>
        <taxon>Bacillati</taxon>
        <taxon>Bacillota</taxon>
        <taxon>Bacilli</taxon>
        <taxon>Bacillales</taxon>
        <taxon>Staphylococcaceae</taxon>
        <taxon>Staphylococcus</taxon>
    </lineage>
</organism>
<reference key="1">
    <citation type="journal article" date="2001" name="Lancet">
        <title>Whole genome sequencing of meticillin-resistant Staphylococcus aureus.</title>
        <authorList>
            <person name="Kuroda M."/>
            <person name="Ohta T."/>
            <person name="Uchiyama I."/>
            <person name="Baba T."/>
            <person name="Yuzawa H."/>
            <person name="Kobayashi I."/>
            <person name="Cui L."/>
            <person name="Oguchi A."/>
            <person name="Aoki K."/>
            <person name="Nagai Y."/>
            <person name="Lian J.-Q."/>
            <person name="Ito T."/>
            <person name="Kanamori M."/>
            <person name="Matsumaru H."/>
            <person name="Maruyama A."/>
            <person name="Murakami H."/>
            <person name="Hosoyama A."/>
            <person name="Mizutani-Ui Y."/>
            <person name="Takahashi N.K."/>
            <person name="Sawano T."/>
            <person name="Inoue R."/>
            <person name="Kaito C."/>
            <person name="Sekimizu K."/>
            <person name="Hirakawa H."/>
            <person name="Kuhara S."/>
            <person name="Goto S."/>
            <person name="Yabuzaki J."/>
            <person name="Kanehisa M."/>
            <person name="Yamashita A."/>
            <person name="Oshima K."/>
            <person name="Furuya K."/>
            <person name="Yoshino C."/>
            <person name="Shiba T."/>
            <person name="Hattori M."/>
            <person name="Ogasawara N."/>
            <person name="Hayashi H."/>
            <person name="Hiramatsu K."/>
        </authorList>
    </citation>
    <scope>NUCLEOTIDE SEQUENCE [LARGE SCALE GENOMIC DNA]</scope>
    <source>
        <strain>N315</strain>
    </source>
</reference>
<reference key="2">
    <citation type="journal article" date="2005" name="FEMS Microbiol. Lett.">
        <title>Staphylococcal Drp35 is the functional counterpart of the eukaryotic PONs.</title>
        <authorList>
            <person name="Morikawa K."/>
            <person name="Hidaka T."/>
            <person name="Murakami H."/>
            <person name="Hayashi H."/>
            <person name="Ohta T."/>
        </authorList>
    </citation>
    <scope>FUNCTION</scope>
    <scope>COFACTOR</scope>
    <scope>INDUCTION</scope>
    <scope>REGULATION</scope>
    <scope>SUBCELLULAR LOCATION</scope>
</reference>
<reference key="3">
    <citation type="journal article" date="2005" name="J. Microbiol. Methods">
        <title>Correlation of proteomic and transcriptomic profiles of Staphylococcus aureus during the post-exponential phase of growth.</title>
        <authorList>
            <person name="Scherl A."/>
            <person name="Francois P."/>
            <person name="Bento M."/>
            <person name="Deshusses J.M."/>
            <person name="Charbonnier Y."/>
            <person name="Converset V."/>
            <person name="Huyghe A."/>
            <person name="Walter N."/>
            <person name="Hoogland C."/>
            <person name="Appel R.D."/>
            <person name="Sanchez J.-C."/>
            <person name="Zimmermann-Ivol C.G."/>
            <person name="Corthals G.L."/>
            <person name="Hochstrasser D.F."/>
            <person name="Schrenzel J."/>
        </authorList>
    </citation>
    <scope>IDENTIFICATION BY MASS SPECTROMETRY</scope>
    <source>
        <strain>N315</strain>
    </source>
</reference>
<reference key="4">
    <citation type="submission" date="2007-10" db="UniProtKB">
        <title>Shotgun proteomic analysis of total and membrane protein extracts of S. aureus strain N315.</title>
        <authorList>
            <person name="Vaezzadeh A.R."/>
            <person name="Deshusses J."/>
            <person name="Lescuyer P."/>
            <person name="Hochstrasser D.F."/>
        </authorList>
    </citation>
    <scope>IDENTIFICATION BY MASS SPECTROMETRY [LARGE SCALE ANALYSIS]</scope>
    <source>
        <strain>N315</strain>
    </source>
</reference>
<accession>Q7A338</accession>
<keyword id="KW-0046">Antibiotic resistance</keyword>
<keyword id="KW-0106">Calcium</keyword>
<keyword id="KW-0963">Cytoplasm</keyword>
<keyword id="KW-0378">Hydrolase</keyword>
<keyword id="KW-0479">Metal-binding</keyword>
<gene>
    <name type="primary">drp35</name>
    <name type="ordered locus">SA2480</name>
</gene>
<name>DRP35_STAAN</name>
<evidence type="ECO:0000250" key="1"/>
<evidence type="ECO:0000255" key="2"/>
<evidence type="ECO:0000269" key="3">
    <source>
    </source>
</evidence>
<evidence type="ECO:0000305" key="4"/>
<comment type="function">
    <text evidence="3">Exhibits lactonase activity for dihydrocoumarin or 2-coumaranone, although its natural substrate is not known. Acts in cells with perturbed membrane integrity and is possibly related to the membrane homeostasis. Contributes to bacitracin resistance.</text>
</comment>
<comment type="cofactor">
    <cofactor evidence="3">
        <name>Ca(2+)</name>
        <dbReference type="ChEBI" id="CHEBI:29108"/>
    </cofactor>
    <text evidence="3">Binds 2 Ca(2+) ions per subunit.</text>
</comment>
<comment type="activity regulation">
    <text>Activity is decreased by EGTA or EDTA.</text>
</comment>
<comment type="subcellular location">
    <subcellularLocation>
        <location evidence="3">Cytoplasm</location>
    </subcellularLocation>
</comment>
<comment type="induction">
    <text evidence="3">Induced by cell wall-affecting antibiotics such as oxacillin, beta-lactams, vancomycin, fosfomycin, bacitracin and detergents such as Triton X-100, SDS, Nonidet P40, and CHAPS.</text>
</comment>
<comment type="miscellaneous">
    <text>Not essential for cells to maintain the levels of resistance to most of the cell wall-affecting antibiotics although they can effectively induce its expression.</text>
</comment>
<comment type="similarity">
    <text evidence="4">Belongs to the SMP-30/CGR1 family.</text>
</comment>
<sequence>MMSQQDLPTLFYSGKSNSAVPIISESELQTITAEPWLEISKKGLQLEGLNFDRQGQLFLLDVFEGNIFKINPETKEIKRPFVSHKANPAAIKIHKDGRLFVCYLGDFKSTGGIFAATENGDNLQDIIEDLSTAYCIDDMVFDSKGGFYFTDFRGYSTNPLGGVYYVSPDFRTVTPIIQNISVANGIALSTDEKVLWVTETTANRLHRIALEDDGVTIQPFGATIPYYFTGHEGPDSCCIDSDDNLYVAMYGQGRVLVFNKRGYPIGQILIPGRDEGHMLRSTHPQFIPGTNQLIICSNDIEMGGGSMLYTVNGFAKGHQSFQFQ</sequence>
<feature type="chain" id="PRO_0000259751" description="Lactonase drp35">
    <location>
        <begin position="1"/>
        <end position="324"/>
    </location>
</feature>
<feature type="active site" description="Proton donor" evidence="2">
    <location>
        <position position="235"/>
    </location>
</feature>
<feature type="binding site" evidence="1">
    <location>
        <position position="47"/>
    </location>
    <ligand>
        <name>Ca(2+)</name>
        <dbReference type="ChEBI" id="CHEBI:29108"/>
        <label>1</label>
        <note>catalytic</note>
    </ligand>
</feature>
<feature type="binding site" evidence="1">
    <location>
        <position position="109"/>
    </location>
    <ligand>
        <name>Ca(2+)</name>
        <dbReference type="ChEBI" id="CHEBI:29108"/>
        <label>2</label>
    </ligand>
</feature>
<feature type="binding site" evidence="1">
    <location>
        <position position="111"/>
    </location>
    <ligand>
        <name>Ca(2+)</name>
        <dbReference type="ChEBI" id="CHEBI:29108"/>
        <label>2</label>
    </ligand>
</feature>
<feature type="binding site" evidence="1">
    <location>
        <position position="129"/>
    </location>
    <ligand>
        <name>Ca(2+)</name>
        <dbReference type="ChEBI" id="CHEBI:29108"/>
        <label>2</label>
    </ligand>
</feature>
<feature type="binding site" evidence="1">
    <location>
        <position position="132"/>
    </location>
    <ligand>
        <name>Ca(2+)</name>
        <dbReference type="ChEBI" id="CHEBI:29108"/>
        <label>2</label>
    </ligand>
</feature>
<feature type="binding site" evidence="1">
    <location>
        <position position="134"/>
    </location>
    <ligand>
        <name>Ca(2+)</name>
        <dbReference type="ChEBI" id="CHEBI:29108"/>
        <label>2</label>
    </ligand>
</feature>
<feature type="binding site" evidence="1">
    <location>
        <position position="137"/>
    </location>
    <ligand>
        <name>Ca(2+)</name>
        <dbReference type="ChEBI" id="CHEBI:29108"/>
        <label>1</label>
        <note>catalytic</note>
    </ligand>
</feature>
<feature type="binding site" evidence="1">
    <location>
        <position position="184"/>
    </location>
    <ligand>
        <name>Ca(2+)</name>
        <dbReference type="ChEBI" id="CHEBI:29108"/>
        <label>1</label>
        <note>catalytic</note>
    </ligand>
</feature>
<feature type="binding site" evidence="1">
    <location>
        <position position="235"/>
    </location>
    <ligand>
        <name>Ca(2+)</name>
        <dbReference type="ChEBI" id="CHEBI:29108"/>
        <label>1</label>
        <note>catalytic</note>
    </ligand>
</feature>
<feature type="binding site" evidence="1">
    <location>
        <position position="236"/>
    </location>
    <ligand>
        <name>Ca(2+)</name>
        <dbReference type="ChEBI" id="CHEBI:29108"/>
        <label>1</label>
        <note>catalytic</note>
    </ligand>
</feature>
<proteinExistence type="evidence at protein level"/>
<dbReference type="EC" id="3.1.1.-"/>
<dbReference type="EMBL" id="BA000018">
    <property type="protein sequence ID" value="BAB43786.1"/>
    <property type="molecule type" value="Genomic_DNA"/>
</dbReference>
<dbReference type="PIR" id="H90077">
    <property type="entry name" value="H90077"/>
</dbReference>
<dbReference type="SMR" id="Q7A338"/>
<dbReference type="EnsemblBacteria" id="BAB43786">
    <property type="protein sequence ID" value="BAB43786"/>
    <property type="gene ID" value="BAB43786"/>
</dbReference>
<dbReference type="KEGG" id="sau:SA2480"/>
<dbReference type="HOGENOM" id="CLU_036110_2_0_9"/>
<dbReference type="GO" id="GO:0005737">
    <property type="term" value="C:cytoplasm"/>
    <property type="evidence" value="ECO:0007669"/>
    <property type="project" value="UniProtKB-SubCell"/>
</dbReference>
<dbReference type="GO" id="GO:0016787">
    <property type="term" value="F:hydrolase activity"/>
    <property type="evidence" value="ECO:0007669"/>
    <property type="project" value="UniProtKB-KW"/>
</dbReference>
<dbReference type="GO" id="GO:0046872">
    <property type="term" value="F:metal ion binding"/>
    <property type="evidence" value="ECO:0007669"/>
    <property type="project" value="UniProtKB-KW"/>
</dbReference>
<dbReference type="GO" id="GO:0046677">
    <property type="term" value="P:response to antibiotic"/>
    <property type="evidence" value="ECO:0007669"/>
    <property type="project" value="UniProtKB-KW"/>
</dbReference>
<dbReference type="Gene3D" id="2.120.10.30">
    <property type="entry name" value="TolB, C-terminal domain"/>
    <property type="match status" value="1"/>
</dbReference>
<dbReference type="InterPro" id="IPR011042">
    <property type="entry name" value="6-blade_b-propeller_TolB-like"/>
</dbReference>
<dbReference type="InterPro" id="IPR013658">
    <property type="entry name" value="SGL"/>
</dbReference>
<dbReference type="InterPro" id="IPR051262">
    <property type="entry name" value="SMP-30/CGR1_Lactonase"/>
</dbReference>
<dbReference type="PANTHER" id="PTHR47572:SF4">
    <property type="entry name" value="LACTONASE DRP35"/>
    <property type="match status" value="1"/>
</dbReference>
<dbReference type="PANTHER" id="PTHR47572">
    <property type="entry name" value="LIPOPROTEIN-RELATED"/>
    <property type="match status" value="1"/>
</dbReference>
<dbReference type="Pfam" id="PF08450">
    <property type="entry name" value="SGL"/>
    <property type="match status" value="1"/>
</dbReference>
<dbReference type="SUPFAM" id="SSF63829">
    <property type="entry name" value="Calcium-dependent phosphotriesterase"/>
    <property type="match status" value="1"/>
</dbReference>
<protein>
    <recommendedName>
        <fullName>Lactonase drp35</fullName>
        <ecNumber>3.1.1.-</ecNumber>
    </recommendedName>
</protein>